<proteinExistence type="evidence at protein level"/>
<accession>P18989</accession>
<name>HBB_PROLO</name>
<evidence type="ECO:0000250" key="1">
    <source>
        <dbReference type="UniProtKB" id="P02086"/>
    </source>
</evidence>
<evidence type="ECO:0000250" key="2">
    <source>
        <dbReference type="UniProtKB" id="P68871"/>
    </source>
</evidence>
<evidence type="ECO:0000255" key="3">
    <source>
        <dbReference type="PROSITE-ProRule" id="PRU00238"/>
    </source>
</evidence>
<gene>
    <name type="primary">HBB</name>
</gene>
<dbReference type="PIR" id="S06525">
    <property type="entry name" value="HBRR"/>
</dbReference>
<dbReference type="SMR" id="P18989"/>
<dbReference type="GO" id="GO:0072562">
    <property type="term" value="C:blood microparticle"/>
    <property type="evidence" value="ECO:0007669"/>
    <property type="project" value="TreeGrafter"/>
</dbReference>
<dbReference type="GO" id="GO:0031838">
    <property type="term" value="C:haptoglobin-hemoglobin complex"/>
    <property type="evidence" value="ECO:0007669"/>
    <property type="project" value="TreeGrafter"/>
</dbReference>
<dbReference type="GO" id="GO:0005833">
    <property type="term" value="C:hemoglobin complex"/>
    <property type="evidence" value="ECO:0007669"/>
    <property type="project" value="InterPro"/>
</dbReference>
<dbReference type="GO" id="GO:0031720">
    <property type="term" value="F:haptoglobin binding"/>
    <property type="evidence" value="ECO:0007669"/>
    <property type="project" value="TreeGrafter"/>
</dbReference>
<dbReference type="GO" id="GO:0020037">
    <property type="term" value="F:heme binding"/>
    <property type="evidence" value="ECO:0007669"/>
    <property type="project" value="InterPro"/>
</dbReference>
<dbReference type="GO" id="GO:0031721">
    <property type="term" value="F:hemoglobin alpha binding"/>
    <property type="evidence" value="ECO:0007669"/>
    <property type="project" value="TreeGrafter"/>
</dbReference>
<dbReference type="GO" id="GO:0046872">
    <property type="term" value="F:metal ion binding"/>
    <property type="evidence" value="ECO:0007669"/>
    <property type="project" value="UniProtKB-KW"/>
</dbReference>
<dbReference type="GO" id="GO:0043177">
    <property type="term" value="F:organic acid binding"/>
    <property type="evidence" value="ECO:0007669"/>
    <property type="project" value="TreeGrafter"/>
</dbReference>
<dbReference type="GO" id="GO:0019825">
    <property type="term" value="F:oxygen binding"/>
    <property type="evidence" value="ECO:0007669"/>
    <property type="project" value="InterPro"/>
</dbReference>
<dbReference type="GO" id="GO:0005344">
    <property type="term" value="F:oxygen carrier activity"/>
    <property type="evidence" value="ECO:0007669"/>
    <property type="project" value="UniProtKB-KW"/>
</dbReference>
<dbReference type="GO" id="GO:0004601">
    <property type="term" value="F:peroxidase activity"/>
    <property type="evidence" value="ECO:0007669"/>
    <property type="project" value="TreeGrafter"/>
</dbReference>
<dbReference type="GO" id="GO:0042744">
    <property type="term" value="P:hydrogen peroxide catabolic process"/>
    <property type="evidence" value="ECO:0007669"/>
    <property type="project" value="TreeGrafter"/>
</dbReference>
<dbReference type="CDD" id="cd08925">
    <property type="entry name" value="Hb-beta-like"/>
    <property type="match status" value="1"/>
</dbReference>
<dbReference type="FunFam" id="1.10.490.10:FF:000001">
    <property type="entry name" value="Hemoglobin subunit beta"/>
    <property type="match status" value="1"/>
</dbReference>
<dbReference type="Gene3D" id="1.10.490.10">
    <property type="entry name" value="Globins"/>
    <property type="match status" value="1"/>
</dbReference>
<dbReference type="InterPro" id="IPR000971">
    <property type="entry name" value="Globin"/>
</dbReference>
<dbReference type="InterPro" id="IPR009050">
    <property type="entry name" value="Globin-like_sf"/>
</dbReference>
<dbReference type="InterPro" id="IPR012292">
    <property type="entry name" value="Globin/Proto"/>
</dbReference>
<dbReference type="InterPro" id="IPR002337">
    <property type="entry name" value="Hemoglobin_b"/>
</dbReference>
<dbReference type="InterPro" id="IPR050056">
    <property type="entry name" value="Hemoglobin_oxygen_transport"/>
</dbReference>
<dbReference type="PANTHER" id="PTHR11442">
    <property type="entry name" value="HEMOGLOBIN FAMILY MEMBER"/>
    <property type="match status" value="1"/>
</dbReference>
<dbReference type="PANTHER" id="PTHR11442:SF42">
    <property type="entry name" value="HEMOGLOBIN SUBUNIT BETA"/>
    <property type="match status" value="1"/>
</dbReference>
<dbReference type="Pfam" id="PF00042">
    <property type="entry name" value="Globin"/>
    <property type="match status" value="1"/>
</dbReference>
<dbReference type="PRINTS" id="PR00814">
    <property type="entry name" value="BETAHAEM"/>
</dbReference>
<dbReference type="SUPFAM" id="SSF46458">
    <property type="entry name" value="Globin-like"/>
    <property type="match status" value="1"/>
</dbReference>
<dbReference type="PROSITE" id="PS01033">
    <property type="entry name" value="GLOBIN"/>
    <property type="match status" value="1"/>
</dbReference>
<organism>
    <name type="scientific">Procyon lotor</name>
    <name type="common">Raccoon</name>
    <dbReference type="NCBI Taxonomy" id="9654"/>
    <lineage>
        <taxon>Eukaryota</taxon>
        <taxon>Metazoa</taxon>
        <taxon>Chordata</taxon>
        <taxon>Craniata</taxon>
        <taxon>Vertebrata</taxon>
        <taxon>Euteleostomi</taxon>
        <taxon>Mammalia</taxon>
        <taxon>Eutheria</taxon>
        <taxon>Laurasiatheria</taxon>
        <taxon>Carnivora</taxon>
        <taxon>Caniformia</taxon>
        <taxon>Musteloidea</taxon>
        <taxon>Procyonidae</taxon>
        <taxon>Procyon</taxon>
    </lineage>
</organism>
<protein>
    <recommendedName>
        <fullName>Hemoglobin subunit beta</fullName>
    </recommendedName>
    <alternativeName>
        <fullName>Beta-globin</fullName>
    </alternativeName>
    <alternativeName>
        <fullName>Hemoglobin beta chain</fullName>
    </alternativeName>
</protein>
<comment type="function">
    <text>Involved in oxygen transport from the lung to the various peripheral tissues.</text>
</comment>
<comment type="subunit">
    <text>Heterotetramer of two alpha chains and two beta chains.</text>
</comment>
<comment type="tissue specificity">
    <text>Red blood cells.</text>
</comment>
<comment type="similarity">
    <text evidence="3">Belongs to the globin family.</text>
</comment>
<keyword id="KW-0007">Acetylation</keyword>
<keyword id="KW-0903">Direct protein sequencing</keyword>
<keyword id="KW-0349">Heme</keyword>
<keyword id="KW-0408">Iron</keyword>
<keyword id="KW-0479">Metal-binding</keyword>
<keyword id="KW-0561">Oxygen transport</keyword>
<keyword id="KW-0597">Phosphoprotein</keyword>
<keyword id="KW-0702">S-nitrosylation</keyword>
<keyword id="KW-0813">Transport</keyword>
<feature type="chain" id="PRO_0000053078" description="Hemoglobin subunit beta">
    <location>
        <begin position="1"/>
        <end position="146"/>
    </location>
</feature>
<feature type="domain" description="Globin" evidence="3">
    <location>
        <begin position="2"/>
        <end position="146"/>
    </location>
</feature>
<feature type="binding site" description="distal binding residue">
    <location>
        <position position="63"/>
    </location>
    <ligand>
        <name>heme b</name>
        <dbReference type="ChEBI" id="CHEBI:60344"/>
    </ligand>
    <ligandPart>
        <name>Fe</name>
        <dbReference type="ChEBI" id="CHEBI:18248"/>
    </ligandPart>
</feature>
<feature type="binding site" description="proximal binding residue">
    <location>
        <position position="92"/>
    </location>
    <ligand>
        <name>heme b</name>
        <dbReference type="ChEBI" id="CHEBI:60344"/>
    </ligand>
    <ligandPart>
        <name>Fe</name>
        <dbReference type="ChEBI" id="CHEBI:18248"/>
    </ligandPart>
</feature>
<feature type="modified residue" description="N-acetylvaline" evidence="1">
    <location>
        <position position="1"/>
    </location>
</feature>
<feature type="modified residue" description="Phosphothreonine" evidence="2">
    <location>
        <position position="12"/>
    </location>
</feature>
<feature type="modified residue" description="Phosphoserine" evidence="2">
    <location>
        <position position="44"/>
    </location>
</feature>
<feature type="modified residue" description="N6-acetyllysine" evidence="2">
    <location>
        <position position="59"/>
    </location>
</feature>
<feature type="modified residue" description="N6-acetyllysine" evidence="2">
    <location>
        <position position="82"/>
    </location>
</feature>
<feature type="modified residue" description="S-nitrosocysteine" evidence="2">
    <location>
        <position position="93"/>
    </location>
</feature>
<feature type="modified residue" description="N6-acetyllysine" evidence="2">
    <location>
        <position position="144"/>
    </location>
</feature>
<reference key="1">
    <citation type="journal article" date="1978" name="Hemoglobin">
        <title>Amino acid sequence of the hemoglobin of raccoon (Procyon lotor).</title>
        <authorList>
            <person name="Brimhall B."/>
            <person name="Stangland K."/>
            <person name="Jones R.T."/>
            <person name="Becker R.R."/>
            <person name="Bailey T.J."/>
        </authorList>
    </citation>
    <scope>PROTEIN SEQUENCE</scope>
</reference>
<sequence length="146" mass="16007">VHLTADEKTAVTTLWGKVNVEEVGGEALGRLLVVYPWTQRFFESFGDLSSADAIMGNPKVKAHGKKVLNSFSEGLKNLDNLKGTFAKLSELHCDKLHVDPENFRLLGNVLVCVLAHHFGKEFTPPVQAAYQKVVAGVANALAHKYH</sequence>